<protein>
    <recommendedName>
        <fullName>Protein bfr2</fullName>
    </recommendedName>
</protein>
<gene>
    <name type="primary">bfr2</name>
    <name type="ORF">B15B10.001</name>
    <name type="ORF">NCU04787</name>
</gene>
<organism>
    <name type="scientific">Neurospora crassa (strain ATCC 24698 / 74-OR23-1A / CBS 708.71 / DSM 1257 / FGSC 987)</name>
    <dbReference type="NCBI Taxonomy" id="367110"/>
    <lineage>
        <taxon>Eukaryota</taxon>
        <taxon>Fungi</taxon>
        <taxon>Dikarya</taxon>
        <taxon>Ascomycota</taxon>
        <taxon>Pezizomycotina</taxon>
        <taxon>Sordariomycetes</taxon>
        <taxon>Sordariomycetidae</taxon>
        <taxon>Sordariales</taxon>
        <taxon>Sordariaceae</taxon>
        <taxon>Neurospora</taxon>
    </lineage>
</organism>
<name>BFR2_NEUCR</name>
<comment type="subcellular location">
    <subcellularLocation>
        <location evidence="1">Nucleus</location>
        <location evidence="1">Nucleolus</location>
    </subcellularLocation>
</comment>
<comment type="similarity">
    <text evidence="3">Belongs to the AATF family.</text>
</comment>
<evidence type="ECO:0000250" key="1"/>
<evidence type="ECO:0000256" key="2">
    <source>
        <dbReference type="SAM" id="MobiDB-lite"/>
    </source>
</evidence>
<evidence type="ECO:0000305" key="3"/>
<feature type="chain" id="PRO_0000056630" description="Protein bfr2">
    <location>
        <begin position="1"/>
        <end position="636"/>
    </location>
</feature>
<feature type="region of interest" description="Disordered" evidence="2">
    <location>
        <begin position="1"/>
        <end position="303"/>
    </location>
</feature>
<feature type="compositionally biased region" description="Basic and acidic residues" evidence="2">
    <location>
        <begin position="16"/>
        <end position="32"/>
    </location>
</feature>
<feature type="compositionally biased region" description="Acidic residues" evidence="2">
    <location>
        <begin position="33"/>
        <end position="45"/>
    </location>
</feature>
<feature type="compositionally biased region" description="Acidic residues" evidence="2">
    <location>
        <begin position="87"/>
        <end position="128"/>
    </location>
</feature>
<feature type="compositionally biased region" description="Acidic residues" evidence="2">
    <location>
        <begin position="136"/>
        <end position="153"/>
    </location>
</feature>
<feature type="compositionally biased region" description="Acidic residues" evidence="2">
    <location>
        <begin position="195"/>
        <end position="222"/>
    </location>
</feature>
<feature type="compositionally biased region" description="Acidic residues" evidence="2">
    <location>
        <begin position="229"/>
        <end position="247"/>
    </location>
</feature>
<feature type="compositionally biased region" description="Acidic residues" evidence="2">
    <location>
        <begin position="254"/>
        <end position="298"/>
    </location>
</feature>
<reference key="1">
    <citation type="journal article" date="2003" name="Nucleic Acids Res.">
        <title>What's in the genome of a filamentous fungus? Analysis of the Neurospora genome sequence.</title>
        <authorList>
            <person name="Mannhaupt G."/>
            <person name="Montrone C."/>
            <person name="Haase D."/>
            <person name="Mewes H.-W."/>
            <person name="Aign V."/>
            <person name="Hoheisel J.D."/>
            <person name="Fartmann B."/>
            <person name="Nyakatura G."/>
            <person name="Kempken F."/>
            <person name="Maier J."/>
            <person name="Schulte U."/>
        </authorList>
    </citation>
    <scope>NUCLEOTIDE SEQUENCE [LARGE SCALE GENOMIC DNA]</scope>
    <source>
        <strain>ATCC 24698 / 74-OR23-1A / CBS 708.71 / DSM 1257 / FGSC 987</strain>
    </source>
</reference>
<reference key="2">
    <citation type="journal article" date="2003" name="Nature">
        <title>The genome sequence of the filamentous fungus Neurospora crassa.</title>
        <authorList>
            <person name="Galagan J.E."/>
            <person name="Calvo S.E."/>
            <person name="Borkovich K.A."/>
            <person name="Selker E.U."/>
            <person name="Read N.D."/>
            <person name="Jaffe D.B."/>
            <person name="FitzHugh W."/>
            <person name="Ma L.-J."/>
            <person name="Smirnov S."/>
            <person name="Purcell S."/>
            <person name="Rehman B."/>
            <person name="Elkins T."/>
            <person name="Engels R."/>
            <person name="Wang S."/>
            <person name="Nielsen C.B."/>
            <person name="Butler J."/>
            <person name="Endrizzi M."/>
            <person name="Qui D."/>
            <person name="Ianakiev P."/>
            <person name="Bell-Pedersen D."/>
            <person name="Nelson M.A."/>
            <person name="Werner-Washburne M."/>
            <person name="Selitrennikoff C.P."/>
            <person name="Kinsey J.A."/>
            <person name="Braun E.L."/>
            <person name="Zelter A."/>
            <person name="Schulte U."/>
            <person name="Kothe G.O."/>
            <person name="Jedd G."/>
            <person name="Mewes H.-W."/>
            <person name="Staben C."/>
            <person name="Marcotte E."/>
            <person name="Greenberg D."/>
            <person name="Roy A."/>
            <person name="Foley K."/>
            <person name="Naylor J."/>
            <person name="Stange-Thomann N."/>
            <person name="Barrett R."/>
            <person name="Gnerre S."/>
            <person name="Kamal M."/>
            <person name="Kamvysselis M."/>
            <person name="Mauceli E.W."/>
            <person name="Bielke C."/>
            <person name="Rudd S."/>
            <person name="Frishman D."/>
            <person name="Krystofova S."/>
            <person name="Rasmussen C."/>
            <person name="Metzenberg R.L."/>
            <person name="Perkins D.D."/>
            <person name="Kroken S."/>
            <person name="Cogoni C."/>
            <person name="Macino G."/>
            <person name="Catcheside D.E.A."/>
            <person name="Li W."/>
            <person name="Pratt R.J."/>
            <person name="Osmani S.A."/>
            <person name="DeSouza C.P.C."/>
            <person name="Glass N.L."/>
            <person name="Orbach M.J."/>
            <person name="Berglund J.A."/>
            <person name="Voelker R."/>
            <person name="Yarden O."/>
            <person name="Plamann M."/>
            <person name="Seiler S."/>
            <person name="Dunlap J.C."/>
            <person name="Radford A."/>
            <person name="Aramayo R."/>
            <person name="Natvig D.O."/>
            <person name="Alex L.A."/>
            <person name="Mannhaupt G."/>
            <person name="Ebbole D.J."/>
            <person name="Freitag M."/>
            <person name="Paulsen I."/>
            <person name="Sachs M.S."/>
            <person name="Lander E.S."/>
            <person name="Nusbaum C."/>
            <person name="Birren B.W."/>
        </authorList>
    </citation>
    <scope>NUCLEOTIDE SEQUENCE [LARGE SCALE GENOMIC DNA]</scope>
    <source>
        <strain>ATCC 24698 / 74-OR23-1A / CBS 708.71 / DSM 1257 / FGSC 987</strain>
    </source>
</reference>
<proteinExistence type="inferred from homology"/>
<accession>Q7S6P8</accession>
<dbReference type="EMBL" id="BX897677">
    <property type="protein sequence ID" value="CAE85565.1"/>
    <property type="molecule type" value="Genomic_DNA"/>
</dbReference>
<dbReference type="EMBL" id="CM002241">
    <property type="protein sequence ID" value="EAA31177.3"/>
    <property type="molecule type" value="Genomic_DNA"/>
</dbReference>
<dbReference type="RefSeq" id="XP_960413.3">
    <property type="nucleotide sequence ID" value="XM_955320.3"/>
</dbReference>
<dbReference type="SMR" id="Q7S6P8"/>
<dbReference type="FunCoup" id="Q7S6P8">
    <property type="interactions" value="866"/>
</dbReference>
<dbReference type="STRING" id="367110.Q7S6P8"/>
<dbReference type="PaxDb" id="5141-EFNCRP00000004475"/>
<dbReference type="EnsemblFungi" id="EAA31177">
    <property type="protein sequence ID" value="EAA31177"/>
    <property type="gene ID" value="NCU04787"/>
</dbReference>
<dbReference type="GeneID" id="3876588"/>
<dbReference type="KEGG" id="ncr:NCU04787"/>
<dbReference type="VEuPathDB" id="FungiDB:NCU04787"/>
<dbReference type="HOGENOM" id="CLU_018299_2_0_1"/>
<dbReference type="InParanoid" id="Q7S6P8"/>
<dbReference type="OrthoDB" id="5783963at2759"/>
<dbReference type="Proteomes" id="UP000001805">
    <property type="component" value="Chromosome 5, Linkage Group VI"/>
</dbReference>
<dbReference type="GO" id="GO:0005730">
    <property type="term" value="C:nucleolus"/>
    <property type="evidence" value="ECO:0000318"/>
    <property type="project" value="GO_Central"/>
</dbReference>
<dbReference type="GO" id="GO:0000462">
    <property type="term" value="P:maturation of SSU-rRNA from tricistronic rRNA transcript (SSU-rRNA, 5.8S rRNA, LSU-rRNA)"/>
    <property type="evidence" value="ECO:0000318"/>
    <property type="project" value="GO_Central"/>
</dbReference>
<dbReference type="InterPro" id="IPR025160">
    <property type="entry name" value="AATF"/>
</dbReference>
<dbReference type="InterPro" id="IPR039223">
    <property type="entry name" value="AATF/Bfr2"/>
</dbReference>
<dbReference type="InterPro" id="IPR012617">
    <property type="entry name" value="AATF_C"/>
</dbReference>
<dbReference type="PANTHER" id="PTHR15565">
    <property type="entry name" value="AATF PROTEIN APOPTOSIS ANTAGONIZING TRANSCRIPTION FACTOR"/>
    <property type="match status" value="1"/>
</dbReference>
<dbReference type="PANTHER" id="PTHR15565:SF0">
    <property type="entry name" value="PROTEIN AATF"/>
    <property type="match status" value="1"/>
</dbReference>
<dbReference type="Pfam" id="PF13339">
    <property type="entry name" value="AATF-Che1"/>
    <property type="match status" value="1"/>
</dbReference>
<dbReference type="Pfam" id="PF08164">
    <property type="entry name" value="TRAUB"/>
    <property type="match status" value="1"/>
</dbReference>
<sequence length="636" mass="71634">MPLYTTKKSNKLRASMFDEKPAKDYDPEAEPRDGDDDQSGSEADSDVERAETEHYVTVGKSKLRKAEAPTLGPEYSGTRVSRKALEESDEEDFEDEEEDDEEDDDDEDDLEDGESETGSEEFADPDTADLERDHIDEDAEISSDNALGEDDADWAEKFTFRGSSKPKTPAKTSKKDDLAVRIKKRPTAADFMSGSEDDEEEEDDEEDLEEDEEDEEDSEEGEQNGLFDMEAEETEDDEGEDDEEELDGALLSGSDDEEGDSEEDDEDDEEGSGDEDEDEDDEDEDEDEDDESGDDDEKNDVNAELRKIMAEDEKKIVSTFSKAAEADAQKGVAVRSQRRIFDSILNLRIRLQKALIAANTFNCVEKPENFKEKPYEAAEEAAVKLWNTIDSVRNSFLPEQVKAKAGEKRKRDAIELDTPAQEIWEVLEAVEGPANKYRRQVLDKWSTRVRSTTASMTKERRLAQSAGSQSLVSVLDDQLLSADRLIKKARTPRSCAPAQAAKKVEEDADIYDDADFYQLLLKELVDQRSSDSAAPGESVATVRWAALKEAKTRKQVDRKASKGRKLRFTVHEKLQNFMAPEDRRSWEEHAIDRFFGTLFGQKMVLKEDEAEAEAAEEDEEMGGVNVEEAGLKLFRS</sequence>
<keyword id="KW-0539">Nucleus</keyword>
<keyword id="KW-1185">Reference proteome</keyword>